<name>BLAC_MYCTO</name>
<organism>
    <name type="scientific">Mycobacterium tuberculosis (strain CDC 1551 / Oshkosh)</name>
    <dbReference type="NCBI Taxonomy" id="83331"/>
    <lineage>
        <taxon>Bacteria</taxon>
        <taxon>Bacillati</taxon>
        <taxon>Actinomycetota</taxon>
        <taxon>Actinomycetes</taxon>
        <taxon>Mycobacteriales</taxon>
        <taxon>Mycobacteriaceae</taxon>
        <taxon>Mycobacterium</taxon>
        <taxon>Mycobacterium tuberculosis complex</taxon>
    </lineage>
</organism>
<reference key="1">
    <citation type="journal article" date="2002" name="J. Bacteriol.">
        <title>Whole-genome comparison of Mycobacterium tuberculosis clinical and laboratory strains.</title>
        <authorList>
            <person name="Fleischmann R.D."/>
            <person name="Alland D."/>
            <person name="Eisen J.A."/>
            <person name="Carpenter L."/>
            <person name="White O."/>
            <person name="Peterson J.D."/>
            <person name="DeBoy R.T."/>
            <person name="Dodson R.J."/>
            <person name="Gwinn M.L."/>
            <person name="Haft D.H."/>
            <person name="Hickey E.K."/>
            <person name="Kolonay J.F."/>
            <person name="Nelson W.C."/>
            <person name="Umayam L.A."/>
            <person name="Ermolaeva M.D."/>
            <person name="Salzberg S.L."/>
            <person name="Delcher A."/>
            <person name="Utterback T.R."/>
            <person name="Weidman J.F."/>
            <person name="Khouri H.M."/>
            <person name="Gill J."/>
            <person name="Mikula A."/>
            <person name="Bishai W."/>
            <person name="Jacobs W.R. Jr."/>
            <person name="Venter J.C."/>
            <person name="Fraser C.M."/>
        </authorList>
    </citation>
    <scope>NUCLEOTIDE SEQUENCE [LARGE SCALE GENOMIC DNA]</scope>
    <source>
        <strain>CDC 1551 / Oshkosh</strain>
    </source>
</reference>
<reference key="2">
    <citation type="journal article" date="1991" name="Biochem. J.">
        <title>A standard numbering scheme for the class A beta-lactamases.</title>
        <authorList>
            <person name="Ambler R.P."/>
            <person name="Coulson A.F."/>
            <person name="Frere J.M."/>
            <person name="Ghuysen J.M."/>
            <person name="Joris B."/>
            <person name="Forsman M."/>
            <person name="Levesque R.C."/>
            <person name="Tiraby G."/>
            <person name="Waley S.G."/>
        </authorList>
    </citation>
    <scope>AMINO ACID NUMBERING SCHEME</scope>
</reference>
<protein>
    <recommendedName>
        <fullName evidence="2">Beta-lactamase</fullName>
        <ecNumber evidence="2">3.5.2.6</ecNumber>
    </recommendedName>
    <alternativeName>
        <fullName evidence="2">Ambler class A beta-lactamase</fullName>
    </alternativeName>
</protein>
<sequence>MRNRGFGRRELLVAMAMLVSVTGCARHASGARPASTTLPAGADLADRFAELERRYDARLGVYVPATGTTAAIEYRADERFAFCSTFKAPLVAAVLHQNPLTHLDKLITYTSDDIRSISPVAQQHVQTGMTIGQLCDAAIRYSDGTAANLLLADLGGPGGGTAAFTGYLRSLGDTVSRLDAEEPELNRDPPGDERDTTTPHAIALVLQQLVLGNALPPDKRALLTDWMARNTTGAKRIRAGFPADWKVIDKTGTGDYGRANDIAVVWSPTGVPYVVAVMSDRAGGGYDAEPREALLAEAATCVAGVLA</sequence>
<accession>P9WKD2</accession>
<accession>L0T8I9</accession>
<accession>P0A5I6</accession>
<accession>P0C5C1</accession>
<accession>Q10670</accession>
<gene>
    <name type="primary">blaC</name>
    <name type="synonym">blaA</name>
    <name type="ordered locus">MT2128</name>
</gene>
<comment type="function">
    <text evidence="2">Extended spectrum beta-lactamase (ESBL) that inactivates beta-lactam antibiotics by hydrolyzing the amide group of the beta-lactam ring. Displays high levels of penicillinase and cephalosporinase activity as well as measurable activity with carbapenems, including imipenem and meropenem. Plays a primary role in the intrinsic resistance of M.tuberculosis to beta-lactam antibiotics.</text>
</comment>
<comment type="catalytic activity">
    <reaction evidence="2">
        <text>a beta-lactam + H2O = a substituted beta-amino acid</text>
        <dbReference type="Rhea" id="RHEA:20401"/>
        <dbReference type="ChEBI" id="CHEBI:15377"/>
        <dbReference type="ChEBI" id="CHEBI:35627"/>
        <dbReference type="ChEBI" id="CHEBI:140347"/>
        <dbReference type="EC" id="3.5.2.6"/>
    </reaction>
</comment>
<comment type="activity regulation">
    <text evidence="2">Is inhibited by clavulanate.</text>
</comment>
<comment type="subunit">
    <text evidence="2">Monomer.</text>
</comment>
<comment type="subcellular location">
    <subcellularLocation>
        <location evidence="2">Periplasm</location>
    </subcellularLocation>
    <subcellularLocation>
        <location evidence="1">Secreted</location>
    </subcellularLocation>
</comment>
<comment type="PTM">
    <text evidence="2">Exported by the Tat system. The position of the signal peptide cleavage has not been experimentally proven.</text>
</comment>
<comment type="miscellaneous">
    <text evidence="5">The class A beta-lactamase family has a specific amino-acid numbering system, sometimes called Ambler or ABL numbering and often misspelt as Amber. A multiple sequence alignment was used to derive a consensus sequence and then the consensus was numbered taking into account insertions and deletions. This allows use of identical numbers, e.g. for active site residues, despite differences in protein length. UniProt always uses natural numbering of residues, hence there appear to be differences in numbering between this entry and some papers.</text>
</comment>
<comment type="similarity">
    <text evidence="4">Belongs to the class-A beta-lactamase family.</text>
</comment>
<proteinExistence type="inferred from homology"/>
<keyword id="KW-0046">Antibiotic resistance</keyword>
<keyword id="KW-0378">Hydrolase</keyword>
<keyword id="KW-0574">Periplasm</keyword>
<keyword id="KW-1185">Reference proteome</keyword>
<keyword id="KW-0964">Secreted</keyword>
<keyword id="KW-0732">Signal</keyword>
<feature type="signal peptide" description="Tat-type signal" evidence="3">
    <location>
        <begin position="1"/>
        <end position="34"/>
    </location>
</feature>
<feature type="chain" id="PRO_0000427674" description="Beta-lactamase">
    <location>
        <begin position="35"/>
        <end position="307"/>
    </location>
</feature>
<feature type="active site" description="Acyl-ester intermediate" evidence="2">
    <location>
        <position position="84"/>
    </location>
</feature>
<feature type="active site" description="Proton acceptor" evidence="2">
    <location>
        <position position="182"/>
    </location>
</feature>
<feature type="binding site" evidence="2">
    <location>
        <position position="142"/>
    </location>
    <ligand>
        <name>substrate</name>
    </ligand>
</feature>
<feature type="binding site" evidence="2">
    <location>
        <begin position="251"/>
        <end position="253"/>
    </location>
    <ligand>
        <name>substrate</name>
    </ligand>
</feature>
<feature type="site" description="Increases nucleophilicity of active site Ser" evidence="2">
    <location>
        <position position="87"/>
    </location>
</feature>
<feature type="site" description="Functions as a gatekeeper residue that regulates substrate accessibility to the enzyme active site" evidence="2">
    <location>
        <position position="117"/>
    </location>
</feature>
<evidence type="ECO:0000250" key="1">
    <source>
        <dbReference type="UniProtKB" id="A5U493"/>
    </source>
</evidence>
<evidence type="ECO:0000250" key="2">
    <source>
        <dbReference type="UniProtKB" id="P9WKD3"/>
    </source>
</evidence>
<evidence type="ECO:0000255" key="3">
    <source>
        <dbReference type="PROSITE-ProRule" id="PRU00648"/>
    </source>
</evidence>
<evidence type="ECO:0000305" key="4"/>
<evidence type="ECO:0000305" key="5">
    <source>
    </source>
</evidence>
<dbReference type="EC" id="3.5.2.6" evidence="2"/>
<dbReference type="EMBL" id="AE000516">
    <property type="protein sequence ID" value="AAK46408.1"/>
    <property type="molecule type" value="Genomic_DNA"/>
</dbReference>
<dbReference type="PIR" id="G70764">
    <property type="entry name" value="G70764"/>
</dbReference>
<dbReference type="RefSeq" id="WP_003410677.1">
    <property type="nucleotide sequence ID" value="NZ_KK341227.1"/>
</dbReference>
<dbReference type="SMR" id="P9WKD2"/>
<dbReference type="BindingDB" id="P9WKD2"/>
<dbReference type="GeneID" id="45426045"/>
<dbReference type="KEGG" id="mtc:MT2128"/>
<dbReference type="PATRIC" id="fig|83331.31.peg.2296"/>
<dbReference type="HOGENOM" id="CLU_031960_6_0_11"/>
<dbReference type="Proteomes" id="UP000001020">
    <property type="component" value="Chromosome"/>
</dbReference>
<dbReference type="GO" id="GO:0005576">
    <property type="term" value="C:extracellular region"/>
    <property type="evidence" value="ECO:0007669"/>
    <property type="project" value="UniProtKB-SubCell"/>
</dbReference>
<dbReference type="GO" id="GO:0042597">
    <property type="term" value="C:periplasmic space"/>
    <property type="evidence" value="ECO:0007669"/>
    <property type="project" value="UniProtKB-SubCell"/>
</dbReference>
<dbReference type="GO" id="GO:0008800">
    <property type="term" value="F:beta-lactamase activity"/>
    <property type="evidence" value="ECO:0007669"/>
    <property type="project" value="UniProtKB-EC"/>
</dbReference>
<dbReference type="GO" id="GO:0030655">
    <property type="term" value="P:beta-lactam antibiotic catabolic process"/>
    <property type="evidence" value="ECO:0007669"/>
    <property type="project" value="InterPro"/>
</dbReference>
<dbReference type="GO" id="GO:0046677">
    <property type="term" value="P:response to antibiotic"/>
    <property type="evidence" value="ECO:0007669"/>
    <property type="project" value="UniProtKB-KW"/>
</dbReference>
<dbReference type="FunFam" id="3.40.710.10:FF:000033">
    <property type="entry name" value="Beta-lactamase"/>
    <property type="match status" value="1"/>
</dbReference>
<dbReference type="Gene3D" id="3.40.710.10">
    <property type="entry name" value="DD-peptidase/beta-lactamase superfamily"/>
    <property type="match status" value="1"/>
</dbReference>
<dbReference type="InterPro" id="IPR012338">
    <property type="entry name" value="Beta-lactam/transpept-like"/>
</dbReference>
<dbReference type="InterPro" id="IPR045155">
    <property type="entry name" value="Beta-lactam_cat"/>
</dbReference>
<dbReference type="InterPro" id="IPR000871">
    <property type="entry name" value="Beta-lactam_class-A"/>
</dbReference>
<dbReference type="InterPro" id="IPR023650">
    <property type="entry name" value="Beta-lactam_class-A_AS"/>
</dbReference>
<dbReference type="NCBIfam" id="NF033103">
    <property type="entry name" value="bla_class_A"/>
    <property type="match status" value="1"/>
</dbReference>
<dbReference type="NCBIfam" id="NF041154">
    <property type="entry name" value="MTB_classA_BlaC"/>
    <property type="match status" value="1"/>
</dbReference>
<dbReference type="PANTHER" id="PTHR35333">
    <property type="entry name" value="BETA-LACTAMASE"/>
    <property type="match status" value="1"/>
</dbReference>
<dbReference type="PANTHER" id="PTHR35333:SF3">
    <property type="entry name" value="BETA-LACTAMASE-TYPE TRANSPEPTIDASE FOLD CONTAINING PROTEIN"/>
    <property type="match status" value="1"/>
</dbReference>
<dbReference type="Pfam" id="PF13354">
    <property type="entry name" value="Beta-lactamase2"/>
    <property type="match status" value="1"/>
</dbReference>
<dbReference type="PRINTS" id="PR00118">
    <property type="entry name" value="BLACTAMASEA"/>
</dbReference>
<dbReference type="SUPFAM" id="SSF56601">
    <property type="entry name" value="beta-lactamase/transpeptidase-like"/>
    <property type="match status" value="1"/>
</dbReference>
<dbReference type="PROSITE" id="PS00146">
    <property type="entry name" value="BETA_LACTAMASE_A"/>
    <property type="match status" value="1"/>
</dbReference>